<reference key="1">
    <citation type="journal article" date="2007" name="PLoS ONE">
        <title>Complete genomic characterization of a pathogenic A.II strain of Francisella tularensis subspecies tularensis.</title>
        <authorList>
            <person name="Beckstrom-Sternberg S.M."/>
            <person name="Auerbach R.K."/>
            <person name="Godbole S."/>
            <person name="Pearson J.V."/>
            <person name="Beckstrom-Sternberg J.S."/>
            <person name="Deng Z."/>
            <person name="Munk C."/>
            <person name="Kubota K."/>
            <person name="Zhou Y."/>
            <person name="Bruce D."/>
            <person name="Noronha J."/>
            <person name="Scheuermann R.H."/>
            <person name="Wang A."/>
            <person name="Wei X."/>
            <person name="Wang J."/>
            <person name="Hao J."/>
            <person name="Wagner D.M."/>
            <person name="Brettin T.S."/>
            <person name="Brown N."/>
            <person name="Gilna P."/>
            <person name="Keim P.S."/>
        </authorList>
    </citation>
    <scope>NUCLEOTIDE SEQUENCE [LARGE SCALE GENOMIC DNA]</scope>
    <source>
        <strain>WY96-3418</strain>
    </source>
</reference>
<dbReference type="EMBL" id="CP000608">
    <property type="protein sequence ID" value="ABO47427.1"/>
    <property type="molecule type" value="Genomic_DNA"/>
</dbReference>
<dbReference type="RefSeq" id="WP_003017796.1">
    <property type="nucleotide sequence ID" value="NC_009257.1"/>
</dbReference>
<dbReference type="SMR" id="A4IZS8"/>
<dbReference type="KEGG" id="ftw:FTW_1751"/>
<dbReference type="HOGENOM" id="CLU_058591_0_2_6"/>
<dbReference type="GO" id="GO:0022627">
    <property type="term" value="C:cytosolic small ribosomal subunit"/>
    <property type="evidence" value="ECO:0007669"/>
    <property type="project" value="TreeGrafter"/>
</dbReference>
<dbReference type="GO" id="GO:0003729">
    <property type="term" value="F:mRNA binding"/>
    <property type="evidence" value="ECO:0007669"/>
    <property type="project" value="UniProtKB-UniRule"/>
</dbReference>
<dbReference type="GO" id="GO:0019843">
    <property type="term" value="F:rRNA binding"/>
    <property type="evidence" value="ECO:0007669"/>
    <property type="project" value="UniProtKB-UniRule"/>
</dbReference>
<dbReference type="GO" id="GO:0003735">
    <property type="term" value="F:structural constituent of ribosome"/>
    <property type="evidence" value="ECO:0007669"/>
    <property type="project" value="InterPro"/>
</dbReference>
<dbReference type="GO" id="GO:0006412">
    <property type="term" value="P:translation"/>
    <property type="evidence" value="ECO:0007669"/>
    <property type="project" value="UniProtKB-UniRule"/>
</dbReference>
<dbReference type="CDD" id="cd02412">
    <property type="entry name" value="KH-II_30S_S3"/>
    <property type="match status" value="1"/>
</dbReference>
<dbReference type="FunFam" id="3.30.1140.32:FF:000001">
    <property type="entry name" value="30S ribosomal protein S3"/>
    <property type="match status" value="1"/>
</dbReference>
<dbReference type="FunFam" id="3.30.300.20:FF:000001">
    <property type="entry name" value="30S ribosomal protein S3"/>
    <property type="match status" value="1"/>
</dbReference>
<dbReference type="Gene3D" id="3.30.300.20">
    <property type="match status" value="1"/>
</dbReference>
<dbReference type="Gene3D" id="3.30.1140.32">
    <property type="entry name" value="Ribosomal protein S3, C-terminal domain"/>
    <property type="match status" value="1"/>
</dbReference>
<dbReference type="HAMAP" id="MF_01309_B">
    <property type="entry name" value="Ribosomal_uS3_B"/>
    <property type="match status" value="1"/>
</dbReference>
<dbReference type="InterPro" id="IPR004087">
    <property type="entry name" value="KH_dom"/>
</dbReference>
<dbReference type="InterPro" id="IPR015946">
    <property type="entry name" value="KH_dom-like_a/b"/>
</dbReference>
<dbReference type="InterPro" id="IPR004044">
    <property type="entry name" value="KH_dom_type_2"/>
</dbReference>
<dbReference type="InterPro" id="IPR009019">
    <property type="entry name" value="KH_sf_prok-type"/>
</dbReference>
<dbReference type="InterPro" id="IPR036419">
    <property type="entry name" value="Ribosomal_S3_C_sf"/>
</dbReference>
<dbReference type="InterPro" id="IPR005704">
    <property type="entry name" value="Ribosomal_uS3_bac-typ"/>
</dbReference>
<dbReference type="InterPro" id="IPR001351">
    <property type="entry name" value="Ribosomal_uS3_C"/>
</dbReference>
<dbReference type="InterPro" id="IPR018280">
    <property type="entry name" value="Ribosomal_uS3_CS"/>
</dbReference>
<dbReference type="NCBIfam" id="TIGR01009">
    <property type="entry name" value="rpsC_bact"/>
    <property type="match status" value="1"/>
</dbReference>
<dbReference type="PANTHER" id="PTHR11760">
    <property type="entry name" value="30S/40S RIBOSOMAL PROTEIN S3"/>
    <property type="match status" value="1"/>
</dbReference>
<dbReference type="PANTHER" id="PTHR11760:SF19">
    <property type="entry name" value="SMALL RIBOSOMAL SUBUNIT PROTEIN US3C"/>
    <property type="match status" value="1"/>
</dbReference>
<dbReference type="Pfam" id="PF07650">
    <property type="entry name" value="KH_2"/>
    <property type="match status" value="1"/>
</dbReference>
<dbReference type="Pfam" id="PF00189">
    <property type="entry name" value="Ribosomal_S3_C"/>
    <property type="match status" value="1"/>
</dbReference>
<dbReference type="SMART" id="SM00322">
    <property type="entry name" value="KH"/>
    <property type="match status" value="1"/>
</dbReference>
<dbReference type="SUPFAM" id="SSF54814">
    <property type="entry name" value="Prokaryotic type KH domain (KH-domain type II)"/>
    <property type="match status" value="1"/>
</dbReference>
<dbReference type="SUPFAM" id="SSF54821">
    <property type="entry name" value="Ribosomal protein S3 C-terminal domain"/>
    <property type="match status" value="1"/>
</dbReference>
<dbReference type="PROSITE" id="PS50823">
    <property type="entry name" value="KH_TYPE_2"/>
    <property type="match status" value="1"/>
</dbReference>
<dbReference type="PROSITE" id="PS00548">
    <property type="entry name" value="RIBOSOMAL_S3"/>
    <property type="match status" value="1"/>
</dbReference>
<accession>A4IZS8</accession>
<proteinExistence type="inferred from homology"/>
<comment type="function">
    <text evidence="1">Binds the lower part of the 30S subunit head. Binds mRNA in the 70S ribosome, positioning it for translation.</text>
</comment>
<comment type="subunit">
    <text evidence="1">Part of the 30S ribosomal subunit. Forms a tight complex with proteins S10 and S14.</text>
</comment>
<comment type="similarity">
    <text evidence="1">Belongs to the universal ribosomal protein uS3 family.</text>
</comment>
<gene>
    <name evidence="1" type="primary">rpsC</name>
    <name type="ordered locus">FTW_1751</name>
</gene>
<organism>
    <name type="scientific">Francisella tularensis subsp. tularensis (strain WY96-3418)</name>
    <dbReference type="NCBI Taxonomy" id="418136"/>
    <lineage>
        <taxon>Bacteria</taxon>
        <taxon>Pseudomonadati</taxon>
        <taxon>Pseudomonadota</taxon>
        <taxon>Gammaproteobacteria</taxon>
        <taxon>Thiotrichales</taxon>
        <taxon>Francisellaceae</taxon>
        <taxon>Francisella</taxon>
    </lineage>
</organism>
<evidence type="ECO:0000255" key="1">
    <source>
        <dbReference type="HAMAP-Rule" id="MF_01309"/>
    </source>
</evidence>
<evidence type="ECO:0000305" key="2"/>
<name>RS3_FRATW</name>
<keyword id="KW-0687">Ribonucleoprotein</keyword>
<keyword id="KW-0689">Ribosomal protein</keyword>
<keyword id="KW-0694">RNA-binding</keyword>
<keyword id="KW-0699">rRNA-binding</keyword>
<protein>
    <recommendedName>
        <fullName evidence="1">Small ribosomal subunit protein uS3</fullName>
    </recommendedName>
    <alternativeName>
        <fullName evidence="2">30S ribosomal protein S3</fullName>
    </alternativeName>
</protein>
<sequence>MGQKVNPNGIRLGYIRDWRSTWYADSSRYATKLNEDIKVREFLHKKLAAAAVSKIQIERPAQNAKITIHTARPGIVIGKKGEDVEKLRAEVHKLMGIPVQINIEEVRKPEIDAKLVAESVAQQLEKRVMFRRAMKKAMQAAMKSGAKGIKIMVSGRLGGAEIARSEWARDGRVPLQTFRADVDYATAEALTTYGVIGVKVWIYKGEILPGQIAEKKNNKKGAK</sequence>
<feature type="chain" id="PRO_0000293793" description="Small ribosomal subunit protein uS3">
    <location>
        <begin position="1"/>
        <end position="223"/>
    </location>
</feature>
<feature type="domain" description="KH type-2" evidence="1">
    <location>
        <begin position="39"/>
        <end position="107"/>
    </location>
</feature>